<comment type="catalytic activity">
    <reaction evidence="1">
        <text>1-(5-phospho-beta-D-ribosyl)-5-[(5-phospho-beta-D-ribosylamino)methylideneamino]imidazole-4-carboxamide = 5-[(5-phospho-1-deoxy-D-ribulos-1-ylimino)methylamino]-1-(5-phospho-beta-D-ribosyl)imidazole-4-carboxamide</text>
        <dbReference type="Rhea" id="RHEA:15469"/>
        <dbReference type="ChEBI" id="CHEBI:58435"/>
        <dbReference type="ChEBI" id="CHEBI:58525"/>
        <dbReference type="EC" id="5.3.1.16"/>
    </reaction>
</comment>
<comment type="pathway">
    <text evidence="1">Amino-acid biosynthesis; L-histidine biosynthesis; L-histidine from 5-phospho-alpha-D-ribose 1-diphosphate: step 4/9.</text>
</comment>
<comment type="subcellular location">
    <subcellularLocation>
        <location evidence="1">Cytoplasm</location>
    </subcellularLocation>
</comment>
<comment type="similarity">
    <text evidence="1">Belongs to the HisA/HisF family.</text>
</comment>
<evidence type="ECO:0000255" key="1">
    <source>
        <dbReference type="HAMAP-Rule" id="MF_01014"/>
    </source>
</evidence>
<sequence length="245" mass="26179">MIIPAIDLIDGKVVRLYQGDYGQQTTFDLSPQAQLQSYQDQGANWLHIVDLTGAKEPAKRQTTLIAELTAGLSANIQVGGGIRTEEQVAELLSLGVKRVVIGSLAVKEPELVKGWFNKFGSEAICLALDININQSGEKIVAVSGWQSGGGKSLESIVEDFSQVGLKHALVTDISRDGTLTGANTELYRELSSRYPDIAWQASGGIATLEDVAAVRDSGAAGIIIGKALLINQFNVAEAIQCWPNE</sequence>
<accession>Q0HUN5</accession>
<dbReference type="EC" id="5.3.1.16" evidence="1"/>
<dbReference type="EMBL" id="CP000444">
    <property type="protein sequence ID" value="ABI43170.1"/>
    <property type="molecule type" value="Genomic_DNA"/>
</dbReference>
<dbReference type="SMR" id="Q0HUN5"/>
<dbReference type="KEGG" id="shm:Shewmr7_2182"/>
<dbReference type="HOGENOM" id="CLU_048577_1_2_6"/>
<dbReference type="UniPathway" id="UPA00031">
    <property type="reaction ID" value="UER00009"/>
</dbReference>
<dbReference type="GO" id="GO:0005737">
    <property type="term" value="C:cytoplasm"/>
    <property type="evidence" value="ECO:0007669"/>
    <property type="project" value="UniProtKB-SubCell"/>
</dbReference>
<dbReference type="GO" id="GO:0003949">
    <property type="term" value="F:1-(5-phosphoribosyl)-5-[(5-phosphoribosylamino)methylideneamino]imidazole-4-carboxamide isomerase activity"/>
    <property type="evidence" value="ECO:0007669"/>
    <property type="project" value="UniProtKB-UniRule"/>
</dbReference>
<dbReference type="GO" id="GO:0000105">
    <property type="term" value="P:L-histidine biosynthetic process"/>
    <property type="evidence" value="ECO:0007669"/>
    <property type="project" value="UniProtKB-UniRule"/>
</dbReference>
<dbReference type="GO" id="GO:0000162">
    <property type="term" value="P:L-tryptophan biosynthetic process"/>
    <property type="evidence" value="ECO:0007669"/>
    <property type="project" value="TreeGrafter"/>
</dbReference>
<dbReference type="CDD" id="cd04732">
    <property type="entry name" value="HisA"/>
    <property type="match status" value="1"/>
</dbReference>
<dbReference type="FunFam" id="3.20.20.70:FF:000009">
    <property type="entry name" value="1-(5-phosphoribosyl)-5-[(5-phosphoribosylamino)methylideneamino] imidazole-4-carboxamide isomerase"/>
    <property type="match status" value="1"/>
</dbReference>
<dbReference type="Gene3D" id="3.20.20.70">
    <property type="entry name" value="Aldolase class I"/>
    <property type="match status" value="1"/>
</dbReference>
<dbReference type="HAMAP" id="MF_01014">
    <property type="entry name" value="HisA"/>
    <property type="match status" value="1"/>
</dbReference>
<dbReference type="InterPro" id="IPR013785">
    <property type="entry name" value="Aldolase_TIM"/>
</dbReference>
<dbReference type="InterPro" id="IPR006062">
    <property type="entry name" value="His_biosynth"/>
</dbReference>
<dbReference type="InterPro" id="IPR006063">
    <property type="entry name" value="HisA_bact_arch"/>
</dbReference>
<dbReference type="InterPro" id="IPR044524">
    <property type="entry name" value="Isoase_HisA-like"/>
</dbReference>
<dbReference type="InterPro" id="IPR023016">
    <property type="entry name" value="Isoase_HisA-like_bact"/>
</dbReference>
<dbReference type="InterPro" id="IPR011060">
    <property type="entry name" value="RibuloseP-bd_barrel"/>
</dbReference>
<dbReference type="NCBIfam" id="TIGR00007">
    <property type="entry name" value="1-(5-phosphoribosyl)-5-[(5-phosphoribosylamino)methylideneamino]imidazole-4-carboxamide isomerase"/>
    <property type="match status" value="1"/>
</dbReference>
<dbReference type="PANTHER" id="PTHR43090">
    <property type="entry name" value="1-(5-PHOSPHORIBOSYL)-5-[(5-PHOSPHORIBOSYLAMINO)METHYLIDENEAMINO] IMIDAZOLE-4-CARBOXAMIDE ISOMERASE"/>
    <property type="match status" value="1"/>
</dbReference>
<dbReference type="PANTHER" id="PTHR43090:SF2">
    <property type="entry name" value="1-(5-PHOSPHORIBOSYL)-5-[(5-PHOSPHORIBOSYLAMINO)METHYLIDENEAMINO] IMIDAZOLE-4-CARBOXAMIDE ISOMERASE"/>
    <property type="match status" value="1"/>
</dbReference>
<dbReference type="Pfam" id="PF00977">
    <property type="entry name" value="His_biosynth"/>
    <property type="match status" value="1"/>
</dbReference>
<dbReference type="SUPFAM" id="SSF51366">
    <property type="entry name" value="Ribulose-phoshate binding barrel"/>
    <property type="match status" value="1"/>
</dbReference>
<name>HIS4_SHESR</name>
<protein>
    <recommendedName>
        <fullName evidence="1">1-(5-phosphoribosyl)-5-[(5-phosphoribosylamino)methylideneamino] imidazole-4-carboxamide isomerase</fullName>
        <ecNumber evidence="1">5.3.1.16</ecNumber>
    </recommendedName>
    <alternativeName>
        <fullName evidence="1">Phosphoribosylformimino-5-aminoimidazole carboxamide ribotide isomerase</fullName>
    </alternativeName>
</protein>
<keyword id="KW-0028">Amino-acid biosynthesis</keyword>
<keyword id="KW-0963">Cytoplasm</keyword>
<keyword id="KW-0368">Histidine biosynthesis</keyword>
<keyword id="KW-0413">Isomerase</keyword>
<proteinExistence type="inferred from homology"/>
<reference key="1">
    <citation type="submission" date="2006-08" db="EMBL/GenBank/DDBJ databases">
        <title>Complete sequence of chromosome 1 of Shewanella sp. MR-7.</title>
        <authorList>
            <person name="Copeland A."/>
            <person name="Lucas S."/>
            <person name="Lapidus A."/>
            <person name="Barry K."/>
            <person name="Detter J.C."/>
            <person name="Glavina del Rio T."/>
            <person name="Hammon N."/>
            <person name="Israni S."/>
            <person name="Dalin E."/>
            <person name="Tice H."/>
            <person name="Pitluck S."/>
            <person name="Kiss H."/>
            <person name="Brettin T."/>
            <person name="Bruce D."/>
            <person name="Han C."/>
            <person name="Tapia R."/>
            <person name="Gilna P."/>
            <person name="Schmutz J."/>
            <person name="Larimer F."/>
            <person name="Land M."/>
            <person name="Hauser L."/>
            <person name="Kyrpides N."/>
            <person name="Mikhailova N."/>
            <person name="Nealson K."/>
            <person name="Konstantinidis K."/>
            <person name="Klappenbach J."/>
            <person name="Tiedje J."/>
            <person name="Richardson P."/>
        </authorList>
    </citation>
    <scope>NUCLEOTIDE SEQUENCE [LARGE SCALE GENOMIC DNA]</scope>
    <source>
        <strain>MR-7</strain>
    </source>
</reference>
<gene>
    <name evidence="1" type="primary">hisA</name>
    <name type="ordered locus">Shewmr7_2182</name>
</gene>
<organism>
    <name type="scientific">Shewanella sp. (strain MR-7)</name>
    <dbReference type="NCBI Taxonomy" id="60481"/>
    <lineage>
        <taxon>Bacteria</taxon>
        <taxon>Pseudomonadati</taxon>
        <taxon>Pseudomonadota</taxon>
        <taxon>Gammaproteobacteria</taxon>
        <taxon>Alteromonadales</taxon>
        <taxon>Shewanellaceae</taxon>
        <taxon>Shewanella</taxon>
    </lineage>
</organism>
<feature type="chain" id="PRO_0000290540" description="1-(5-phosphoribosyl)-5-[(5-phosphoribosylamino)methylideneamino] imidazole-4-carboxamide isomerase">
    <location>
        <begin position="1"/>
        <end position="245"/>
    </location>
</feature>
<feature type="active site" description="Proton acceptor" evidence="1">
    <location>
        <position position="7"/>
    </location>
</feature>
<feature type="active site" description="Proton donor" evidence="1">
    <location>
        <position position="129"/>
    </location>
</feature>